<feature type="chain" id="PRO_1000002166" description="SsrA-binding protein">
    <location>
        <begin position="1"/>
        <end position="155"/>
    </location>
</feature>
<comment type="function">
    <text evidence="1">Required for rescue of stalled ribosomes mediated by trans-translation. Binds to transfer-messenger RNA (tmRNA), required for stable association of tmRNA with ribosomes. tmRNA and SmpB together mimic tRNA shape, replacing the anticodon stem-loop with SmpB. tmRNA is encoded by the ssrA gene; the 2 termini fold to resemble tRNA(Ala) and it encodes a 'tag peptide', a short internal open reading frame. During trans-translation Ala-aminoacylated tmRNA acts like a tRNA, entering the A-site of stalled ribosomes, displacing the stalled mRNA. The ribosome then switches to translate the ORF on the tmRNA; the nascent peptide is terminated with the 'tag peptide' encoded by the tmRNA and targeted for degradation. The ribosome is freed to recommence translation, which seems to be the essential function of trans-translation.</text>
</comment>
<comment type="subcellular location">
    <subcellularLocation>
        <location evidence="1">Cytoplasm</location>
    </subcellularLocation>
    <text evidence="1">The tmRNA-SmpB complex associates with stalled 70S ribosomes.</text>
</comment>
<comment type="similarity">
    <text evidence="1">Belongs to the SmpB family.</text>
</comment>
<accession>Q1J7Y3</accession>
<protein>
    <recommendedName>
        <fullName evidence="1">SsrA-binding protein</fullName>
    </recommendedName>
    <alternativeName>
        <fullName evidence="1">Small protein B</fullName>
    </alternativeName>
</protein>
<keyword id="KW-0963">Cytoplasm</keyword>
<keyword id="KW-0694">RNA-binding</keyword>
<reference key="1">
    <citation type="journal article" date="2006" name="Proc. Natl. Acad. Sci. U.S.A.">
        <title>Molecular genetic anatomy of inter- and intraserotype variation in the human bacterial pathogen group A Streptococcus.</title>
        <authorList>
            <person name="Beres S.B."/>
            <person name="Richter E.W."/>
            <person name="Nagiec M.J."/>
            <person name="Sumby P."/>
            <person name="Porcella S.F."/>
            <person name="DeLeo F.R."/>
            <person name="Musser J.M."/>
        </authorList>
    </citation>
    <scope>NUCLEOTIDE SEQUENCE [LARGE SCALE GENOMIC DNA]</scope>
    <source>
        <strain>MGAS10750</strain>
    </source>
</reference>
<proteinExistence type="inferred from homology"/>
<organism>
    <name type="scientific">Streptococcus pyogenes serotype M4 (strain MGAS10750)</name>
    <dbReference type="NCBI Taxonomy" id="370554"/>
    <lineage>
        <taxon>Bacteria</taxon>
        <taxon>Bacillati</taxon>
        <taxon>Bacillota</taxon>
        <taxon>Bacilli</taxon>
        <taxon>Lactobacillales</taxon>
        <taxon>Streptococcaceae</taxon>
        <taxon>Streptococcus</taxon>
    </lineage>
</organism>
<gene>
    <name evidence="1" type="primary">smpB</name>
    <name type="ordered locus">MGAS10750_Spy0428</name>
</gene>
<name>SSRP_STRPF</name>
<sequence>MAKGEGHILAQNKKARHDYHIVETVEAGIVLTGTEIKSVRAARIQLKDGFAQIKNGEAWLVNVHIAPFEQGNIWNADPERTRKLLLKKREITHLANELKGTGMTLVPLKVYLKDGFAKVLIGLAKGKHDYDKRETIKRRDQERDIKKQMKHYNAR</sequence>
<evidence type="ECO:0000255" key="1">
    <source>
        <dbReference type="HAMAP-Rule" id="MF_00023"/>
    </source>
</evidence>
<dbReference type="EMBL" id="CP000262">
    <property type="protein sequence ID" value="ABF37378.1"/>
    <property type="molecule type" value="Genomic_DNA"/>
</dbReference>
<dbReference type="SMR" id="Q1J7Y3"/>
<dbReference type="KEGG" id="spi:MGAS10750_Spy0428"/>
<dbReference type="HOGENOM" id="CLU_108953_0_0_9"/>
<dbReference type="Proteomes" id="UP000002434">
    <property type="component" value="Chromosome"/>
</dbReference>
<dbReference type="GO" id="GO:0005829">
    <property type="term" value="C:cytosol"/>
    <property type="evidence" value="ECO:0007669"/>
    <property type="project" value="TreeGrafter"/>
</dbReference>
<dbReference type="GO" id="GO:0003723">
    <property type="term" value="F:RNA binding"/>
    <property type="evidence" value="ECO:0007669"/>
    <property type="project" value="UniProtKB-UniRule"/>
</dbReference>
<dbReference type="GO" id="GO:0070929">
    <property type="term" value="P:trans-translation"/>
    <property type="evidence" value="ECO:0007669"/>
    <property type="project" value="UniProtKB-UniRule"/>
</dbReference>
<dbReference type="CDD" id="cd09294">
    <property type="entry name" value="SmpB"/>
    <property type="match status" value="1"/>
</dbReference>
<dbReference type="Gene3D" id="2.40.280.10">
    <property type="match status" value="1"/>
</dbReference>
<dbReference type="HAMAP" id="MF_00023">
    <property type="entry name" value="SmpB"/>
    <property type="match status" value="1"/>
</dbReference>
<dbReference type="InterPro" id="IPR023620">
    <property type="entry name" value="SmpB"/>
</dbReference>
<dbReference type="InterPro" id="IPR000037">
    <property type="entry name" value="SsrA-bd_prot"/>
</dbReference>
<dbReference type="InterPro" id="IPR020081">
    <property type="entry name" value="SsrA-bd_prot_CS"/>
</dbReference>
<dbReference type="NCBIfam" id="NF003843">
    <property type="entry name" value="PRK05422.1"/>
    <property type="match status" value="1"/>
</dbReference>
<dbReference type="NCBIfam" id="TIGR00086">
    <property type="entry name" value="smpB"/>
    <property type="match status" value="1"/>
</dbReference>
<dbReference type="PANTHER" id="PTHR30308:SF2">
    <property type="entry name" value="SSRA-BINDING PROTEIN"/>
    <property type="match status" value="1"/>
</dbReference>
<dbReference type="PANTHER" id="PTHR30308">
    <property type="entry name" value="TMRNA-BINDING COMPONENT OF TRANS-TRANSLATION TAGGING COMPLEX"/>
    <property type="match status" value="1"/>
</dbReference>
<dbReference type="Pfam" id="PF01668">
    <property type="entry name" value="SmpB"/>
    <property type="match status" value="1"/>
</dbReference>
<dbReference type="SUPFAM" id="SSF74982">
    <property type="entry name" value="Small protein B (SmpB)"/>
    <property type="match status" value="1"/>
</dbReference>
<dbReference type="PROSITE" id="PS01317">
    <property type="entry name" value="SSRP"/>
    <property type="match status" value="1"/>
</dbReference>